<protein>
    <recommendedName>
        <fullName>Phenylalanine-4-hydroxylase</fullName>
        <shortName>PAH</shortName>
        <ecNumber>1.14.16.1</ecNumber>
    </recommendedName>
    <alternativeName>
        <fullName>Phe-4-monooxygenase</fullName>
    </alternativeName>
</protein>
<proteinExistence type="inferred from homology"/>
<feature type="chain" id="PRO_0000205556" description="Phenylalanine-4-hydroxylase">
    <location>
        <begin position="1"/>
        <end position="313"/>
    </location>
</feature>
<feature type="binding site" evidence="2">
    <location>
        <position position="154"/>
    </location>
    <ligand>
        <name>Fe cation</name>
        <dbReference type="ChEBI" id="CHEBI:24875"/>
    </ligand>
</feature>
<feature type="binding site" evidence="2">
    <location>
        <position position="159"/>
    </location>
    <ligand>
        <name>Fe cation</name>
        <dbReference type="ChEBI" id="CHEBI:24875"/>
    </ligand>
</feature>
<feature type="binding site" evidence="2">
    <location>
        <position position="200"/>
    </location>
    <ligand>
        <name>Fe cation</name>
        <dbReference type="ChEBI" id="CHEBI:24875"/>
    </ligand>
</feature>
<accession>Q8XU39</accession>
<sequence length="313" mass="34901">MAIATPTSAAPTPAPAGFTGTLTDKLREQFAEGLDGQTLRPDFTMEQPVHRYTAADHATWRTLYDRQEALLPGRACDEFLQGLSTLGMSREGVPSFDRLNETLMRATGWQIVAVPGLVPDEVFFEHLANRRFPASWWMRRPDQLDYLQEPDGFHDIFGHVPLLINPVFADYMQAYGQGGLKAARLGALDMLARLYWYTVEFGLIRTPAGLRIYGAGIVSSKSESVYALDSASPNRIGFDVHRIMRTRYRIDTFQKTYFVIDSFEQLFDATRPDFTPLYEALGTLPTFGAGDVVDGDAVLNAGTREGWADTADI</sequence>
<keyword id="KW-0408">Iron</keyword>
<keyword id="KW-0479">Metal-binding</keyword>
<keyword id="KW-0503">Monooxygenase</keyword>
<keyword id="KW-0560">Oxidoreductase</keyword>
<keyword id="KW-0585">Phenylalanine catabolism</keyword>
<keyword id="KW-1185">Reference proteome</keyword>
<name>PH4H_RALN1</name>
<gene>
    <name type="primary">phhA</name>
    <name type="ordered locus">RSc3355</name>
    <name type="ORF">RS02630</name>
</gene>
<comment type="catalytic activity">
    <reaction>
        <text>(6R)-L-erythro-5,6,7,8-tetrahydrobiopterin + L-phenylalanine + O2 = (4aS,6R)-4a-hydroxy-L-erythro-5,6,7,8-tetrahydrobiopterin + L-tyrosine</text>
        <dbReference type="Rhea" id="RHEA:20273"/>
        <dbReference type="ChEBI" id="CHEBI:15379"/>
        <dbReference type="ChEBI" id="CHEBI:15642"/>
        <dbReference type="ChEBI" id="CHEBI:58095"/>
        <dbReference type="ChEBI" id="CHEBI:58315"/>
        <dbReference type="ChEBI" id="CHEBI:59560"/>
        <dbReference type="EC" id="1.14.16.1"/>
    </reaction>
</comment>
<comment type="cofactor">
    <cofactor evidence="1">
        <name>Fe(2+)</name>
        <dbReference type="ChEBI" id="CHEBI:29033"/>
    </cofactor>
    <text evidence="1">Binds 1 Fe(2+) ion.</text>
</comment>
<comment type="pathway">
    <text>Amino-acid degradation; L-phenylalanine degradation; acetoacetate and fumarate from L-phenylalanine: step 1/6.</text>
</comment>
<comment type="similarity">
    <text evidence="3">Belongs to the biopterin-dependent aromatic amino acid hydroxylase family.</text>
</comment>
<organism>
    <name type="scientific">Ralstonia nicotianae (strain ATCC BAA-1114 / GMI1000)</name>
    <name type="common">Ralstonia solanacearum</name>
    <dbReference type="NCBI Taxonomy" id="267608"/>
    <lineage>
        <taxon>Bacteria</taxon>
        <taxon>Pseudomonadati</taxon>
        <taxon>Pseudomonadota</taxon>
        <taxon>Betaproteobacteria</taxon>
        <taxon>Burkholderiales</taxon>
        <taxon>Burkholderiaceae</taxon>
        <taxon>Ralstonia</taxon>
        <taxon>Ralstonia solanacearum species complex</taxon>
    </lineage>
</organism>
<evidence type="ECO:0000250" key="1"/>
<evidence type="ECO:0000255" key="2"/>
<evidence type="ECO:0000305" key="3"/>
<reference key="1">
    <citation type="journal article" date="2002" name="Nature">
        <title>Genome sequence of the plant pathogen Ralstonia solanacearum.</title>
        <authorList>
            <person name="Salanoubat M."/>
            <person name="Genin S."/>
            <person name="Artiguenave F."/>
            <person name="Gouzy J."/>
            <person name="Mangenot S."/>
            <person name="Arlat M."/>
            <person name="Billault A."/>
            <person name="Brottier P."/>
            <person name="Camus J.-C."/>
            <person name="Cattolico L."/>
            <person name="Chandler M."/>
            <person name="Choisne N."/>
            <person name="Claudel-Renard C."/>
            <person name="Cunnac S."/>
            <person name="Demange N."/>
            <person name="Gaspin C."/>
            <person name="Lavie M."/>
            <person name="Moisan A."/>
            <person name="Robert C."/>
            <person name="Saurin W."/>
            <person name="Schiex T."/>
            <person name="Siguier P."/>
            <person name="Thebault P."/>
            <person name="Whalen M."/>
            <person name="Wincker P."/>
            <person name="Levy M."/>
            <person name="Weissenbach J."/>
            <person name="Boucher C.A."/>
        </authorList>
    </citation>
    <scope>NUCLEOTIDE SEQUENCE [LARGE SCALE GENOMIC DNA]</scope>
    <source>
        <strain>ATCC BAA-1114 / GMI1000</strain>
    </source>
</reference>
<dbReference type="EC" id="1.14.16.1"/>
<dbReference type="EMBL" id="AL646052">
    <property type="protein sequence ID" value="CAD17143.1"/>
    <property type="molecule type" value="Genomic_DNA"/>
</dbReference>
<dbReference type="RefSeq" id="WP_011003237.1">
    <property type="nucleotide sequence ID" value="NC_003295.1"/>
</dbReference>
<dbReference type="SMR" id="Q8XU39"/>
<dbReference type="STRING" id="267608.RSc3355"/>
<dbReference type="EnsemblBacteria" id="CAD17143">
    <property type="protein sequence ID" value="CAD17143"/>
    <property type="gene ID" value="RSc3355"/>
</dbReference>
<dbReference type="KEGG" id="rso:RSc3355"/>
<dbReference type="PATRIC" id="fig|267608.8.peg.3406"/>
<dbReference type="eggNOG" id="COG3186">
    <property type="taxonomic scope" value="Bacteria"/>
</dbReference>
<dbReference type="HOGENOM" id="CLU_023198_1_0_4"/>
<dbReference type="UniPathway" id="UPA00139">
    <property type="reaction ID" value="UER00337"/>
</dbReference>
<dbReference type="Proteomes" id="UP000001436">
    <property type="component" value="Chromosome"/>
</dbReference>
<dbReference type="GO" id="GO:0005506">
    <property type="term" value="F:iron ion binding"/>
    <property type="evidence" value="ECO:0007669"/>
    <property type="project" value="InterPro"/>
</dbReference>
<dbReference type="GO" id="GO:0004505">
    <property type="term" value="F:phenylalanine 4-monooxygenase activity"/>
    <property type="evidence" value="ECO:0007669"/>
    <property type="project" value="UniProtKB-EC"/>
</dbReference>
<dbReference type="GO" id="GO:0006559">
    <property type="term" value="P:L-phenylalanine catabolic process"/>
    <property type="evidence" value="ECO:0007669"/>
    <property type="project" value="UniProtKB-UniPathway"/>
</dbReference>
<dbReference type="CDD" id="cd03348">
    <property type="entry name" value="pro_PheOH"/>
    <property type="match status" value="1"/>
</dbReference>
<dbReference type="Gene3D" id="1.10.800.10">
    <property type="entry name" value="Aromatic amino acid hydroxylase"/>
    <property type="match status" value="1"/>
</dbReference>
<dbReference type="InterPro" id="IPR001273">
    <property type="entry name" value="ArAA_hydroxylase"/>
</dbReference>
<dbReference type="InterPro" id="IPR018301">
    <property type="entry name" value="ArAA_hydroxylase_Fe/CU_BS"/>
</dbReference>
<dbReference type="InterPro" id="IPR036951">
    <property type="entry name" value="ArAA_hydroxylase_sf"/>
</dbReference>
<dbReference type="InterPro" id="IPR036329">
    <property type="entry name" value="Aro-AA_hydroxylase_C_sf"/>
</dbReference>
<dbReference type="InterPro" id="IPR019774">
    <property type="entry name" value="Aromatic-AA_hydroxylase_C"/>
</dbReference>
<dbReference type="InterPro" id="IPR005960">
    <property type="entry name" value="Phe-4-hydroxylase_mono"/>
</dbReference>
<dbReference type="NCBIfam" id="TIGR01267">
    <property type="entry name" value="Phe4hydrox_mono"/>
    <property type="match status" value="1"/>
</dbReference>
<dbReference type="NCBIfam" id="NF008877">
    <property type="entry name" value="PRK11913.1-2"/>
    <property type="match status" value="1"/>
</dbReference>
<dbReference type="PANTHER" id="PTHR11473">
    <property type="entry name" value="AROMATIC AMINO ACID HYDROXYLASE"/>
    <property type="match status" value="1"/>
</dbReference>
<dbReference type="PANTHER" id="PTHR11473:SF24">
    <property type="entry name" value="PHENYLALANINE-4-HYDROXYLASE"/>
    <property type="match status" value="1"/>
</dbReference>
<dbReference type="Pfam" id="PF00351">
    <property type="entry name" value="Biopterin_H"/>
    <property type="match status" value="1"/>
</dbReference>
<dbReference type="PRINTS" id="PR00372">
    <property type="entry name" value="FYWHYDRXLASE"/>
</dbReference>
<dbReference type="SUPFAM" id="SSF56534">
    <property type="entry name" value="Aromatic aminoacid monoxygenases, catalytic and oligomerization domains"/>
    <property type="match status" value="1"/>
</dbReference>
<dbReference type="PROSITE" id="PS00367">
    <property type="entry name" value="BH4_AAA_HYDROXYL_1"/>
    <property type="match status" value="1"/>
</dbReference>
<dbReference type="PROSITE" id="PS51410">
    <property type="entry name" value="BH4_AAA_HYDROXYL_2"/>
    <property type="match status" value="1"/>
</dbReference>